<gene>
    <name evidence="1" type="primary">dnaA2</name>
    <name type="ordered locus">pc1082</name>
</gene>
<comment type="function">
    <text evidence="1">Plays an essential role in the initiation and regulation of chromosomal replication. ATP-DnaA binds to the origin of replication (oriC) to initiate formation of the DNA replication initiation complex once per cell cycle. Binds the DnaA box (a 9 base pair repeat at the origin) and separates the double-stranded (ds)DNA. Forms a right-handed helical filament on oriC DNA; dsDNA binds to the exterior of the filament while single-stranded (ss)DNA is stabiized in the filament's interior. The ATP-DnaA-oriC complex binds and stabilizes one strand of the AT-rich DNA unwinding element (DUE), permitting loading of DNA polymerase. After initiation quickly degrades to an ADP-DnaA complex that is not apt for DNA replication. Binds acidic phospholipids.</text>
</comment>
<comment type="subunit">
    <text evidence="1">Oligomerizes as a right-handed, spiral filament on DNA at oriC.</text>
</comment>
<comment type="subcellular location">
    <subcellularLocation>
        <location evidence="1">Cytoplasm</location>
    </subcellularLocation>
</comment>
<comment type="domain">
    <text evidence="1">Domain I is involved in oligomerization and binding regulators, domain II is flexibile and of varying length in different bacteria, domain III forms the AAA+ region, while domain IV binds dsDNA.</text>
</comment>
<comment type="similarity">
    <text evidence="1">Belongs to the DnaA family.</text>
</comment>
<sequence>MQAWEEFLKAQEVELGLETVQKWLRTLKIQRFDACNLYLEAKDSFQALWFEEHIRNKAQQKFINGNNKRIKIHLSVANTPQRAKKTKTANKEKDFKAPFELTFDELDPLCLFPYFISTEENLLSHQLLLEIAGLSPQIHSTQLGTFNPIYLYGSGGSGKTHLLMSLAHALKAQGLKVIYVRAETFTDHVVTAIRAGEMSVFRQAYRNIDVLLVDDVHVFSRKGATQEEFFHTFNTLHLEGKQIILASECSPQDLQLIEPRLVSRFEWGIVLPLKPLRPGEMRNLLIAKAKALHFELPLKIADYLIETFKSNAKALIKGLEALVLRLHLDAKHSITALSVTATKALLIDLIEEEQKTAITPQKIIQAVAEQYGIRTEDILGKAQTRECALPRQLAMHLCREQLKMPFMKIGDLFSRDHSTVMSSVKSIQKSLEQDDREISGICHIILKKLQG</sequence>
<evidence type="ECO:0000255" key="1">
    <source>
        <dbReference type="HAMAP-Rule" id="MF_00377"/>
    </source>
</evidence>
<organism>
    <name type="scientific">Protochlamydia amoebophila (strain UWE25)</name>
    <dbReference type="NCBI Taxonomy" id="264201"/>
    <lineage>
        <taxon>Bacteria</taxon>
        <taxon>Pseudomonadati</taxon>
        <taxon>Chlamydiota</taxon>
        <taxon>Chlamydiia</taxon>
        <taxon>Parachlamydiales</taxon>
        <taxon>Parachlamydiaceae</taxon>
        <taxon>Candidatus Protochlamydia</taxon>
    </lineage>
</organism>
<feature type="chain" id="PRO_0000114226" description="Chromosomal replication initiator protein DnaA 2">
    <location>
        <begin position="1"/>
        <end position="451"/>
    </location>
</feature>
<feature type="region of interest" description="Domain I, interacts with DnaA modulators" evidence="1">
    <location>
        <begin position="1"/>
        <end position="68"/>
    </location>
</feature>
<feature type="region of interest" description="Domain II" evidence="1">
    <location>
        <begin position="68"/>
        <end position="104"/>
    </location>
</feature>
<feature type="region of interest" description="Domain III, AAA+ region" evidence="1">
    <location>
        <begin position="105"/>
        <end position="326"/>
    </location>
</feature>
<feature type="region of interest" description="Domain IV, binds dsDNA" evidence="1">
    <location>
        <begin position="327"/>
        <end position="451"/>
    </location>
</feature>
<feature type="binding site" evidence="1">
    <location>
        <position position="156"/>
    </location>
    <ligand>
        <name>ATP</name>
        <dbReference type="ChEBI" id="CHEBI:30616"/>
    </ligand>
</feature>
<feature type="binding site" evidence="1">
    <location>
        <position position="158"/>
    </location>
    <ligand>
        <name>ATP</name>
        <dbReference type="ChEBI" id="CHEBI:30616"/>
    </ligand>
</feature>
<feature type="binding site" evidence="1">
    <location>
        <position position="159"/>
    </location>
    <ligand>
        <name>ATP</name>
        <dbReference type="ChEBI" id="CHEBI:30616"/>
    </ligand>
</feature>
<feature type="binding site" evidence="1">
    <location>
        <position position="160"/>
    </location>
    <ligand>
        <name>ATP</name>
        <dbReference type="ChEBI" id="CHEBI:30616"/>
    </ligand>
</feature>
<proteinExistence type="inferred from homology"/>
<dbReference type="EMBL" id="BX908798">
    <property type="protein sequence ID" value="CAF23806.1"/>
    <property type="molecule type" value="Genomic_DNA"/>
</dbReference>
<dbReference type="RefSeq" id="WP_011175632.1">
    <property type="nucleotide sequence ID" value="NC_005861.2"/>
</dbReference>
<dbReference type="SMR" id="Q6MC93"/>
<dbReference type="STRING" id="264201.pc1082"/>
<dbReference type="KEGG" id="pcu:PC_RS05215"/>
<dbReference type="eggNOG" id="COG0593">
    <property type="taxonomic scope" value="Bacteria"/>
</dbReference>
<dbReference type="HOGENOM" id="CLU_026910_3_2_0"/>
<dbReference type="OrthoDB" id="19837at2"/>
<dbReference type="Proteomes" id="UP000000529">
    <property type="component" value="Chromosome"/>
</dbReference>
<dbReference type="GO" id="GO:0005737">
    <property type="term" value="C:cytoplasm"/>
    <property type="evidence" value="ECO:0007669"/>
    <property type="project" value="UniProtKB-SubCell"/>
</dbReference>
<dbReference type="GO" id="GO:0005886">
    <property type="term" value="C:plasma membrane"/>
    <property type="evidence" value="ECO:0007669"/>
    <property type="project" value="TreeGrafter"/>
</dbReference>
<dbReference type="GO" id="GO:0005524">
    <property type="term" value="F:ATP binding"/>
    <property type="evidence" value="ECO:0007669"/>
    <property type="project" value="UniProtKB-UniRule"/>
</dbReference>
<dbReference type="GO" id="GO:0016887">
    <property type="term" value="F:ATP hydrolysis activity"/>
    <property type="evidence" value="ECO:0007669"/>
    <property type="project" value="InterPro"/>
</dbReference>
<dbReference type="GO" id="GO:0003688">
    <property type="term" value="F:DNA replication origin binding"/>
    <property type="evidence" value="ECO:0007669"/>
    <property type="project" value="UniProtKB-UniRule"/>
</dbReference>
<dbReference type="GO" id="GO:0008289">
    <property type="term" value="F:lipid binding"/>
    <property type="evidence" value="ECO:0007669"/>
    <property type="project" value="UniProtKB-KW"/>
</dbReference>
<dbReference type="GO" id="GO:0006270">
    <property type="term" value="P:DNA replication initiation"/>
    <property type="evidence" value="ECO:0007669"/>
    <property type="project" value="UniProtKB-UniRule"/>
</dbReference>
<dbReference type="GO" id="GO:0006275">
    <property type="term" value="P:regulation of DNA replication"/>
    <property type="evidence" value="ECO:0007669"/>
    <property type="project" value="UniProtKB-UniRule"/>
</dbReference>
<dbReference type="CDD" id="cd00009">
    <property type="entry name" value="AAA"/>
    <property type="match status" value="1"/>
</dbReference>
<dbReference type="CDD" id="cd06571">
    <property type="entry name" value="Bac_DnaA_C"/>
    <property type="match status" value="1"/>
</dbReference>
<dbReference type="Gene3D" id="1.10.1750.10">
    <property type="match status" value="1"/>
</dbReference>
<dbReference type="Gene3D" id="3.30.300.180">
    <property type="match status" value="1"/>
</dbReference>
<dbReference type="Gene3D" id="3.40.50.300">
    <property type="entry name" value="P-loop containing nucleotide triphosphate hydrolases"/>
    <property type="match status" value="1"/>
</dbReference>
<dbReference type="HAMAP" id="MF_00377">
    <property type="entry name" value="DnaA_bact"/>
    <property type="match status" value="1"/>
</dbReference>
<dbReference type="InterPro" id="IPR003593">
    <property type="entry name" value="AAA+_ATPase"/>
</dbReference>
<dbReference type="InterPro" id="IPR001957">
    <property type="entry name" value="Chromosome_initiator_DnaA"/>
</dbReference>
<dbReference type="InterPro" id="IPR020591">
    <property type="entry name" value="Chromosome_initiator_DnaA-like"/>
</dbReference>
<dbReference type="InterPro" id="IPR018312">
    <property type="entry name" value="Chromosome_initiator_DnaA_CS"/>
</dbReference>
<dbReference type="InterPro" id="IPR013159">
    <property type="entry name" value="DnaA_C"/>
</dbReference>
<dbReference type="InterPro" id="IPR013317">
    <property type="entry name" value="DnaA_dom"/>
</dbReference>
<dbReference type="InterPro" id="IPR038454">
    <property type="entry name" value="DnaA_N_sf"/>
</dbReference>
<dbReference type="InterPro" id="IPR027417">
    <property type="entry name" value="P-loop_NTPase"/>
</dbReference>
<dbReference type="InterPro" id="IPR010921">
    <property type="entry name" value="Trp_repressor/repl_initiator"/>
</dbReference>
<dbReference type="NCBIfam" id="TIGR00362">
    <property type="entry name" value="DnaA"/>
    <property type="match status" value="1"/>
</dbReference>
<dbReference type="NCBIfam" id="NF009087">
    <property type="entry name" value="PRK12422.1"/>
    <property type="match status" value="1"/>
</dbReference>
<dbReference type="PANTHER" id="PTHR30050">
    <property type="entry name" value="CHROMOSOMAL REPLICATION INITIATOR PROTEIN DNAA"/>
    <property type="match status" value="1"/>
</dbReference>
<dbReference type="PANTHER" id="PTHR30050:SF2">
    <property type="entry name" value="CHROMOSOMAL REPLICATION INITIATOR PROTEIN DNAA"/>
    <property type="match status" value="1"/>
</dbReference>
<dbReference type="Pfam" id="PF00308">
    <property type="entry name" value="Bac_DnaA"/>
    <property type="match status" value="1"/>
</dbReference>
<dbReference type="Pfam" id="PF08299">
    <property type="entry name" value="Bac_DnaA_C"/>
    <property type="match status" value="1"/>
</dbReference>
<dbReference type="PRINTS" id="PR00051">
    <property type="entry name" value="DNAA"/>
</dbReference>
<dbReference type="SMART" id="SM00382">
    <property type="entry name" value="AAA"/>
    <property type="match status" value="1"/>
</dbReference>
<dbReference type="SMART" id="SM00760">
    <property type="entry name" value="Bac_DnaA_C"/>
    <property type="match status" value="1"/>
</dbReference>
<dbReference type="SUPFAM" id="SSF52540">
    <property type="entry name" value="P-loop containing nucleoside triphosphate hydrolases"/>
    <property type="match status" value="1"/>
</dbReference>
<dbReference type="SUPFAM" id="SSF48295">
    <property type="entry name" value="TrpR-like"/>
    <property type="match status" value="1"/>
</dbReference>
<dbReference type="PROSITE" id="PS01008">
    <property type="entry name" value="DNAA"/>
    <property type="match status" value="1"/>
</dbReference>
<reference key="1">
    <citation type="journal article" date="2004" name="Science">
        <title>Illuminating the evolutionary history of chlamydiae.</title>
        <authorList>
            <person name="Horn M."/>
            <person name="Collingro A."/>
            <person name="Schmitz-Esser S."/>
            <person name="Beier C.L."/>
            <person name="Purkhold U."/>
            <person name="Fartmann B."/>
            <person name="Brandt P."/>
            <person name="Nyakatura G.J."/>
            <person name="Droege M."/>
            <person name="Frishman D."/>
            <person name="Rattei T."/>
            <person name="Mewes H.-W."/>
            <person name="Wagner M."/>
        </authorList>
    </citation>
    <scope>NUCLEOTIDE SEQUENCE [LARGE SCALE GENOMIC DNA]</scope>
    <source>
        <strain>UWE25</strain>
    </source>
</reference>
<accession>Q6MC93</accession>
<name>DNAA2_PARUW</name>
<protein>
    <recommendedName>
        <fullName evidence="1">Chromosomal replication initiator protein DnaA 2</fullName>
    </recommendedName>
</protein>
<keyword id="KW-0067">ATP-binding</keyword>
<keyword id="KW-0963">Cytoplasm</keyword>
<keyword id="KW-0235">DNA replication</keyword>
<keyword id="KW-0238">DNA-binding</keyword>
<keyword id="KW-0446">Lipid-binding</keyword>
<keyword id="KW-0547">Nucleotide-binding</keyword>
<keyword id="KW-1185">Reference proteome</keyword>